<name>RL28_RHOPB</name>
<organism>
    <name type="scientific">Rhodopseudomonas palustris (strain BisB18)</name>
    <dbReference type="NCBI Taxonomy" id="316056"/>
    <lineage>
        <taxon>Bacteria</taxon>
        <taxon>Pseudomonadati</taxon>
        <taxon>Pseudomonadota</taxon>
        <taxon>Alphaproteobacteria</taxon>
        <taxon>Hyphomicrobiales</taxon>
        <taxon>Nitrobacteraceae</taxon>
        <taxon>Rhodopseudomonas</taxon>
    </lineage>
</organism>
<comment type="similarity">
    <text evidence="1">Belongs to the bacterial ribosomal protein bL28 family.</text>
</comment>
<protein>
    <recommendedName>
        <fullName evidence="1">Large ribosomal subunit protein bL28</fullName>
    </recommendedName>
    <alternativeName>
        <fullName evidence="2">50S ribosomal protein L28</fullName>
    </alternativeName>
</protein>
<reference key="1">
    <citation type="submission" date="2006-03" db="EMBL/GenBank/DDBJ databases">
        <title>Complete sequence of Rhodopseudomonas palustris BisB18.</title>
        <authorList>
            <consortium name="US DOE Joint Genome Institute"/>
            <person name="Copeland A."/>
            <person name="Lucas S."/>
            <person name="Lapidus A."/>
            <person name="Barry K."/>
            <person name="Detter J.C."/>
            <person name="Glavina del Rio T."/>
            <person name="Hammon N."/>
            <person name="Israni S."/>
            <person name="Dalin E."/>
            <person name="Tice H."/>
            <person name="Pitluck S."/>
            <person name="Chain P."/>
            <person name="Malfatti S."/>
            <person name="Shin M."/>
            <person name="Vergez L."/>
            <person name="Schmutz J."/>
            <person name="Larimer F."/>
            <person name="Land M."/>
            <person name="Hauser L."/>
            <person name="Pelletier D.A."/>
            <person name="Kyrpides N."/>
            <person name="Anderson I."/>
            <person name="Oda Y."/>
            <person name="Harwood C.S."/>
            <person name="Richardson P."/>
        </authorList>
    </citation>
    <scope>NUCLEOTIDE SEQUENCE [LARGE SCALE GENOMIC DNA]</scope>
    <source>
        <strain>BisB18</strain>
    </source>
</reference>
<evidence type="ECO:0000255" key="1">
    <source>
        <dbReference type="HAMAP-Rule" id="MF_00373"/>
    </source>
</evidence>
<evidence type="ECO:0000305" key="2"/>
<keyword id="KW-0687">Ribonucleoprotein</keyword>
<keyword id="KW-0689">Ribosomal protein</keyword>
<dbReference type="EMBL" id="CP000301">
    <property type="protein sequence ID" value="ABD86118.1"/>
    <property type="molecule type" value="Genomic_DNA"/>
</dbReference>
<dbReference type="SMR" id="Q21BW8"/>
<dbReference type="STRING" id="316056.RPC_0543"/>
<dbReference type="KEGG" id="rpc:RPC_0543"/>
<dbReference type="eggNOG" id="COG0227">
    <property type="taxonomic scope" value="Bacteria"/>
</dbReference>
<dbReference type="HOGENOM" id="CLU_064548_4_2_5"/>
<dbReference type="OrthoDB" id="9805609at2"/>
<dbReference type="GO" id="GO:0022625">
    <property type="term" value="C:cytosolic large ribosomal subunit"/>
    <property type="evidence" value="ECO:0007669"/>
    <property type="project" value="TreeGrafter"/>
</dbReference>
<dbReference type="GO" id="GO:0003735">
    <property type="term" value="F:structural constituent of ribosome"/>
    <property type="evidence" value="ECO:0007669"/>
    <property type="project" value="InterPro"/>
</dbReference>
<dbReference type="GO" id="GO:0006412">
    <property type="term" value="P:translation"/>
    <property type="evidence" value="ECO:0007669"/>
    <property type="project" value="UniProtKB-UniRule"/>
</dbReference>
<dbReference type="Gene3D" id="2.30.170.40">
    <property type="entry name" value="Ribosomal protein L28/L24"/>
    <property type="match status" value="1"/>
</dbReference>
<dbReference type="HAMAP" id="MF_00373">
    <property type="entry name" value="Ribosomal_bL28"/>
    <property type="match status" value="1"/>
</dbReference>
<dbReference type="InterPro" id="IPR026569">
    <property type="entry name" value="Ribosomal_bL28"/>
</dbReference>
<dbReference type="InterPro" id="IPR034704">
    <property type="entry name" value="Ribosomal_bL28/bL31-like_sf"/>
</dbReference>
<dbReference type="InterPro" id="IPR001383">
    <property type="entry name" value="Ribosomal_bL28_bact-type"/>
</dbReference>
<dbReference type="InterPro" id="IPR037147">
    <property type="entry name" value="Ribosomal_bL28_sf"/>
</dbReference>
<dbReference type="NCBIfam" id="TIGR00009">
    <property type="entry name" value="L28"/>
    <property type="match status" value="1"/>
</dbReference>
<dbReference type="PANTHER" id="PTHR13528">
    <property type="entry name" value="39S RIBOSOMAL PROTEIN L28, MITOCHONDRIAL"/>
    <property type="match status" value="1"/>
</dbReference>
<dbReference type="PANTHER" id="PTHR13528:SF2">
    <property type="entry name" value="LARGE RIBOSOMAL SUBUNIT PROTEIN BL28M"/>
    <property type="match status" value="1"/>
</dbReference>
<dbReference type="Pfam" id="PF00830">
    <property type="entry name" value="Ribosomal_L28"/>
    <property type="match status" value="1"/>
</dbReference>
<dbReference type="SUPFAM" id="SSF143800">
    <property type="entry name" value="L28p-like"/>
    <property type="match status" value="1"/>
</dbReference>
<accession>Q21BW8</accession>
<proteinExistence type="inferred from homology"/>
<feature type="chain" id="PRO_1000007330" description="Large ribosomal subunit protein bL28">
    <location>
        <begin position="1"/>
        <end position="101"/>
    </location>
</feature>
<sequence length="101" mass="11100">MSRRCELTAKGAQVGHKVSHSNIKTKRRFLPNLVNVTFLSDALGRPVRLRVSTNALKSVDHRGGLDGFLLKAKDAELSPKAVDIKRQIQKKKLTAELAALA</sequence>
<gene>
    <name evidence="1" type="primary">rpmB</name>
    <name type="ordered locus">RPC_0543</name>
</gene>